<name>SGSM3_RAT</name>
<accession>Q6P6R7</accession>
<accession>Q76KK4</accession>
<feature type="chain" id="PRO_0000307812" description="Small G protein signaling modulator 3">
    <location>
        <begin position="1"/>
        <end position="749"/>
    </location>
</feature>
<feature type="domain" description="Rab-GAP TBC" evidence="4">
    <location>
        <begin position="113"/>
        <end position="304"/>
    </location>
</feature>
<feature type="domain" description="SH3" evidence="6">
    <location>
        <begin position="479"/>
        <end position="538"/>
    </location>
</feature>
<feature type="domain" description="RUN" evidence="5">
    <location>
        <begin position="554"/>
        <end position="717"/>
    </location>
</feature>
<feature type="coiled-coil region" evidence="3">
    <location>
        <begin position="414"/>
        <end position="438"/>
    </location>
</feature>
<feature type="modified residue" description="Phosphoserine" evidence="10">
    <location>
        <position position="405"/>
    </location>
</feature>
<feature type="sequence conflict" description="In Ref. 1; BAC82539." evidence="8" ref="1">
    <original>I</original>
    <variation>V</variation>
    <location>
        <position position="20"/>
    </location>
</feature>
<feature type="sequence conflict" description="In Ref. 1; BAC82539." evidence="8" ref="1">
    <original>A</original>
    <variation>V</variation>
    <location>
        <position position="191"/>
    </location>
</feature>
<feature type="sequence conflict" description="In Ref. 1; BAC82539." evidence="8" ref="1">
    <original>Q</original>
    <variation>R</variation>
    <location>
        <position position="467"/>
    </location>
</feature>
<feature type="sequence conflict" description="In Ref. 1; BAC82539." evidence="8" ref="1">
    <original>D</original>
    <variation>G</variation>
    <location>
        <position position="604"/>
    </location>
</feature>
<feature type="sequence conflict" description="In Ref. 1; BAC82539." evidence="8" ref="1">
    <original>N</original>
    <variation>D</variation>
    <location>
        <position position="639"/>
    </location>
</feature>
<sequence>MSGNHTPSASGPFSALTPSIWPQEILAKSSQKEDSSEPEICYDEFGFRVDKEGSEPGCSQMAGTPLVEDPPQRLRWQAHLEFTHNHDVGDLTWDKIAVSLPRSEKLRSLVLAGIPHGMRPQLWMRLSGALQKKKNSELSYREIVKNSSNDETIAAKQIEKDLLRTMPSNACFANVNSIGVPRLRRVLRALAWLYPEIGYCQGTGMVAACLLLFLEEEDAFWMMCAIIEDLLPASYFSTTLLGVQTDQRVLRHLIVQYLPRLDKLLQEHDIELSLITLHWFLTAFASVVHIRLLLRIWDLFFYEGSLVLFQTTLGMLRLKEEELIQSENSASIFNTLSDIPAQMDDAELLLGEAMQLAGSLTDVAVETQRRKHLAYLIADQGQTLGTSTTTSLSQVVRRRTQRRKSGITSLLFGEDDLEALKAKNIKQTELVADLREAILRVARHFQCTDPKNCSVELTPDYSMESHQRDHENYVACLRSHRRRAKALLDFERHDDDELGFRKNDIITIISQKDEHCWVGELNGLRGWFPAKFVEVLDERSKEYSIAGDDSVTEGVTDLVRGTLCPALKALFEHGLKKPSLLGGACHPWLFIEEAAGREVERDFDSVYSRLVLCKTYRLDEDGKVLTPEELLYRAVQSVNVTHDAAHAQMDVKLRSLICVGLNEQVLHLWLEVLCSSLPTVEKWYQPWSFLRSPGWVQIKCELRVLCCFAFSLSQDWELPAKREEEKQPLKEGVQDMLVKHHLFSWDIDG</sequence>
<protein>
    <recommendedName>
        <fullName>Small G protein signaling modulator 3</fullName>
    </recommendedName>
    <alternativeName>
        <fullName>BDIF-1</fullName>
    </alternativeName>
    <alternativeName>
        <fullName>RUN and TBC1 domain-containing protein 3</fullName>
    </alternativeName>
</protein>
<comment type="function">
    <text evidence="2">May play a cooperative role in NF2-mediated growth suppression of cells. May act as a modulator of small G protein RAB- and RAP-mediated neuronal signal transduction and vesicular transportation pathways (By similarity).</text>
</comment>
<comment type="subunit">
    <text evidence="7">Interacts with GJA1. Interaction with GJA1 induces its degradation. Interacts (via RUN domain) with NF2 (via C-terminus). Interacts with RAB3A, RAB4A, RAB5A, RAB8A, RAB11A, RAP1A, RAP1B, RAP2A, RAP2B and PDCD6I. No interaction with RAB27A. No interaction with GJB1 or GJD2.</text>
</comment>
<comment type="subcellular location">
    <subcellularLocation>
        <location evidence="1">Cytoplasm</location>
    </subcellularLocation>
</comment>
<comment type="tissue specificity">
    <text evidence="7">Expressed in brain, liver, kidney and testis. Moderately expressed in heart, very weakly in lung and muscle. Not expressed in spleen.</text>
</comment>
<comment type="similarity">
    <text evidence="8">Belongs to the small G protein signaling modulator family.</text>
</comment>
<organism>
    <name type="scientific">Rattus norvegicus</name>
    <name type="common">Rat</name>
    <dbReference type="NCBI Taxonomy" id="10116"/>
    <lineage>
        <taxon>Eukaryota</taxon>
        <taxon>Metazoa</taxon>
        <taxon>Chordata</taxon>
        <taxon>Craniata</taxon>
        <taxon>Vertebrata</taxon>
        <taxon>Euteleostomi</taxon>
        <taxon>Mammalia</taxon>
        <taxon>Eutheria</taxon>
        <taxon>Euarchontoglires</taxon>
        <taxon>Glires</taxon>
        <taxon>Rodentia</taxon>
        <taxon>Myomorpha</taxon>
        <taxon>Muroidea</taxon>
        <taxon>Muridae</taxon>
        <taxon>Murinae</taxon>
        <taxon>Rattus</taxon>
    </lineage>
</organism>
<dbReference type="EMBL" id="AB091009">
    <property type="protein sequence ID" value="BAC82539.2"/>
    <property type="molecule type" value="mRNA"/>
</dbReference>
<dbReference type="EMBL" id="BC062060">
    <property type="protein sequence ID" value="AAH62060.1"/>
    <property type="molecule type" value="mRNA"/>
</dbReference>
<dbReference type="RefSeq" id="NP_942082.2">
    <property type="nucleotide sequence ID" value="NM_198787.2"/>
</dbReference>
<dbReference type="BMRB" id="Q6P6R7"/>
<dbReference type="SMR" id="Q6P6R7"/>
<dbReference type="FunCoup" id="Q6P6R7">
    <property type="interactions" value="1397"/>
</dbReference>
<dbReference type="STRING" id="10116.ENSRNOP00000025381"/>
<dbReference type="iPTMnet" id="Q6P6R7"/>
<dbReference type="PhosphoSitePlus" id="Q6P6R7"/>
<dbReference type="jPOST" id="Q6P6R7"/>
<dbReference type="PaxDb" id="10116-ENSRNOP00000025381"/>
<dbReference type="GeneID" id="362963"/>
<dbReference type="KEGG" id="rno:362963"/>
<dbReference type="UCSC" id="RGD:735113">
    <property type="organism name" value="rat"/>
</dbReference>
<dbReference type="AGR" id="RGD:735113"/>
<dbReference type="CTD" id="27352"/>
<dbReference type="RGD" id="735113">
    <property type="gene designation" value="Sgsm3"/>
</dbReference>
<dbReference type="eggNOG" id="KOG2222">
    <property type="taxonomic scope" value="Eukaryota"/>
</dbReference>
<dbReference type="InParanoid" id="Q6P6R7"/>
<dbReference type="PhylomeDB" id="Q6P6R7"/>
<dbReference type="PRO" id="PR:Q6P6R7"/>
<dbReference type="Proteomes" id="UP000002494">
    <property type="component" value="Unplaced"/>
</dbReference>
<dbReference type="GO" id="GO:0005829">
    <property type="term" value="C:cytosol"/>
    <property type="evidence" value="ECO:0000266"/>
    <property type="project" value="RGD"/>
</dbReference>
<dbReference type="GO" id="GO:0005921">
    <property type="term" value="C:gap junction"/>
    <property type="evidence" value="ECO:0000266"/>
    <property type="project" value="RGD"/>
</dbReference>
<dbReference type="GO" id="GO:0005096">
    <property type="term" value="F:GTPase activator activity"/>
    <property type="evidence" value="ECO:0000266"/>
    <property type="project" value="RGD"/>
</dbReference>
<dbReference type="GO" id="GO:0031267">
    <property type="term" value="F:small GTPase binding"/>
    <property type="evidence" value="ECO:0000250"/>
    <property type="project" value="UniProtKB"/>
</dbReference>
<dbReference type="GO" id="GO:0048227">
    <property type="term" value="P:plasma membrane to endosome transport"/>
    <property type="evidence" value="ECO:0000266"/>
    <property type="project" value="RGD"/>
</dbReference>
<dbReference type="GO" id="GO:0045732">
    <property type="term" value="P:positive regulation of protein catabolic process"/>
    <property type="evidence" value="ECO:0000266"/>
    <property type="project" value="RGD"/>
</dbReference>
<dbReference type="GO" id="GO:0032486">
    <property type="term" value="P:Rap protein signal transduction"/>
    <property type="evidence" value="ECO:0000250"/>
    <property type="project" value="UniProtKB"/>
</dbReference>
<dbReference type="GO" id="GO:0051726">
    <property type="term" value="P:regulation of cell cycle"/>
    <property type="evidence" value="ECO:0007669"/>
    <property type="project" value="UniProtKB-KW"/>
</dbReference>
<dbReference type="GO" id="GO:0032483">
    <property type="term" value="P:regulation of Rab protein signal transduction"/>
    <property type="evidence" value="ECO:0000250"/>
    <property type="project" value="UniProtKB"/>
</dbReference>
<dbReference type="CDD" id="cd17688">
    <property type="entry name" value="RUN_SGSM3"/>
    <property type="match status" value="1"/>
</dbReference>
<dbReference type="CDD" id="cd11813">
    <property type="entry name" value="SH3_SGSM3"/>
    <property type="match status" value="1"/>
</dbReference>
<dbReference type="FunFam" id="1.10.472.80:FF:000012">
    <property type="entry name" value="Small G protein signaling modulator 3"/>
    <property type="match status" value="1"/>
</dbReference>
<dbReference type="FunFam" id="1.10.8.270:FF:000013">
    <property type="entry name" value="Small G protein signaling modulator 3"/>
    <property type="match status" value="1"/>
</dbReference>
<dbReference type="FunFam" id="2.30.30.40:FF:000115">
    <property type="entry name" value="Small G protein signaling modulator 3 homolog"/>
    <property type="match status" value="1"/>
</dbReference>
<dbReference type="Gene3D" id="1.20.58.900">
    <property type="match status" value="1"/>
</dbReference>
<dbReference type="Gene3D" id="1.10.8.270">
    <property type="entry name" value="putative rabgap domain of human tbc1 domain family member 14 like domains"/>
    <property type="match status" value="1"/>
</dbReference>
<dbReference type="Gene3D" id="2.30.30.40">
    <property type="entry name" value="SH3 Domains"/>
    <property type="match status" value="1"/>
</dbReference>
<dbReference type="Gene3D" id="1.10.472.80">
    <property type="entry name" value="Ypt/Rab-GAP domain of gyp1p, domain 3"/>
    <property type="match status" value="1"/>
</dbReference>
<dbReference type="InterPro" id="IPR000195">
    <property type="entry name" value="Rab-GAP-TBC_dom"/>
</dbReference>
<dbReference type="InterPro" id="IPR035969">
    <property type="entry name" value="Rab-GAP_TBC_sf"/>
</dbReference>
<dbReference type="InterPro" id="IPR050302">
    <property type="entry name" value="Rab_GAP_TBC_domain"/>
</dbReference>
<dbReference type="InterPro" id="IPR004012">
    <property type="entry name" value="Run_dom"/>
</dbReference>
<dbReference type="InterPro" id="IPR037213">
    <property type="entry name" value="Run_dom_sf"/>
</dbReference>
<dbReference type="InterPro" id="IPR035833">
    <property type="entry name" value="SGSM3_SH3"/>
</dbReference>
<dbReference type="InterPro" id="IPR036028">
    <property type="entry name" value="SH3-like_dom_sf"/>
</dbReference>
<dbReference type="InterPro" id="IPR001452">
    <property type="entry name" value="SH3_domain"/>
</dbReference>
<dbReference type="PANTHER" id="PTHR47219">
    <property type="entry name" value="RAB GTPASE-ACTIVATING PROTEIN 1-LIKE"/>
    <property type="match status" value="1"/>
</dbReference>
<dbReference type="PANTHER" id="PTHR47219:SF13">
    <property type="entry name" value="RUN AND TBC1 DOMAIN-CONTAINING PROTEIN 3"/>
    <property type="match status" value="1"/>
</dbReference>
<dbReference type="Pfam" id="PF00566">
    <property type="entry name" value="RabGAP-TBC"/>
    <property type="match status" value="1"/>
</dbReference>
<dbReference type="Pfam" id="PF02759">
    <property type="entry name" value="RUN"/>
    <property type="match status" value="1"/>
</dbReference>
<dbReference type="Pfam" id="PF00018">
    <property type="entry name" value="SH3_1"/>
    <property type="match status" value="1"/>
</dbReference>
<dbReference type="SMART" id="SM00593">
    <property type="entry name" value="RUN"/>
    <property type="match status" value="1"/>
</dbReference>
<dbReference type="SMART" id="SM00326">
    <property type="entry name" value="SH3"/>
    <property type="match status" value="1"/>
</dbReference>
<dbReference type="SMART" id="SM00164">
    <property type="entry name" value="TBC"/>
    <property type="match status" value="1"/>
</dbReference>
<dbReference type="SUPFAM" id="SSF140741">
    <property type="entry name" value="RUN domain-like"/>
    <property type="match status" value="1"/>
</dbReference>
<dbReference type="SUPFAM" id="SSF50044">
    <property type="entry name" value="SH3-domain"/>
    <property type="match status" value="1"/>
</dbReference>
<dbReference type="SUPFAM" id="SSF47923">
    <property type="entry name" value="Ypt/Rab-GAP domain of gyp1p"/>
    <property type="match status" value="2"/>
</dbReference>
<dbReference type="PROSITE" id="PS50826">
    <property type="entry name" value="RUN"/>
    <property type="match status" value="1"/>
</dbReference>
<dbReference type="PROSITE" id="PS50002">
    <property type="entry name" value="SH3"/>
    <property type="match status" value="1"/>
</dbReference>
<dbReference type="PROSITE" id="PS50086">
    <property type="entry name" value="TBC_RABGAP"/>
    <property type="match status" value="1"/>
</dbReference>
<keyword id="KW-0131">Cell cycle</keyword>
<keyword id="KW-0175">Coiled coil</keyword>
<keyword id="KW-0963">Cytoplasm</keyword>
<keyword id="KW-0338">Growth arrest</keyword>
<keyword id="KW-0597">Phosphoprotein</keyword>
<keyword id="KW-1185">Reference proteome</keyword>
<keyword id="KW-0728">SH3 domain</keyword>
<evidence type="ECO:0000250" key="1">
    <source>
        <dbReference type="UniProtKB" id="Q8VCZ6"/>
    </source>
</evidence>
<evidence type="ECO:0000250" key="2">
    <source>
        <dbReference type="UniProtKB" id="Q96HU1"/>
    </source>
</evidence>
<evidence type="ECO:0000255" key="3"/>
<evidence type="ECO:0000255" key="4">
    <source>
        <dbReference type="PROSITE-ProRule" id="PRU00163"/>
    </source>
</evidence>
<evidence type="ECO:0000255" key="5">
    <source>
        <dbReference type="PROSITE-ProRule" id="PRU00178"/>
    </source>
</evidence>
<evidence type="ECO:0000255" key="6">
    <source>
        <dbReference type="PROSITE-ProRule" id="PRU00192"/>
    </source>
</evidence>
<evidence type="ECO:0000269" key="7">
    <source>
    </source>
</evidence>
<evidence type="ECO:0000305" key="8"/>
<evidence type="ECO:0000312" key="9">
    <source>
        <dbReference type="EMBL" id="AAH62060.1"/>
    </source>
</evidence>
<evidence type="ECO:0007744" key="10">
    <source>
    </source>
</evidence>
<reference key="1">
    <citation type="journal article" date="2011" name="Neurosci. Res.">
        <title>The identification of novel protein, brain-derived integrating factor-1 (BDIF1), which interacts with astrocytic gap junctional protein.</title>
        <authorList>
            <person name="Ito T."/>
            <person name="Ueki T."/>
            <person name="Furukawa H."/>
            <person name="Sato K."/>
        </authorList>
    </citation>
    <scope>NUCLEOTIDE SEQUENCE [MRNA]</scope>
    <scope>TISSUE SPECIFICITY</scope>
    <scope>INTERACTION WITH GJA1</scope>
    <source>
        <tissue>Astrocyte</tissue>
    </source>
</reference>
<reference evidence="9" key="2">
    <citation type="journal article" date="2004" name="Genome Res.">
        <title>The status, quality, and expansion of the NIH full-length cDNA project: the Mammalian Gene Collection (MGC).</title>
        <authorList>
            <consortium name="The MGC Project Team"/>
        </authorList>
    </citation>
    <scope>NUCLEOTIDE SEQUENCE [LARGE SCALE MRNA]</scope>
    <source>
        <tissue evidence="9">Prostate</tissue>
    </source>
</reference>
<reference key="3">
    <citation type="journal article" date="2012" name="Nat. Commun.">
        <title>Quantitative maps of protein phosphorylation sites across 14 different rat organs and tissues.</title>
        <authorList>
            <person name="Lundby A."/>
            <person name="Secher A."/>
            <person name="Lage K."/>
            <person name="Nordsborg N.B."/>
            <person name="Dmytriyev A."/>
            <person name="Lundby C."/>
            <person name="Olsen J.V."/>
        </authorList>
    </citation>
    <scope>PHOSPHORYLATION [LARGE SCALE ANALYSIS] AT SER-405</scope>
    <scope>IDENTIFICATION BY MASS SPECTROMETRY [LARGE SCALE ANALYSIS]</scope>
</reference>
<proteinExistence type="evidence at protein level"/>
<gene>
    <name evidence="2" type="primary">Sgsm3</name>
    <name type="synonym">Bdif1</name>
    <name evidence="9" type="synonym">Rutbc3</name>
</gene>